<proteinExistence type="evidence at transcript level"/>
<accession>Q3SZF3</accession>
<gene>
    <name type="primary">HNRNPH2</name>
    <name type="synonym">HNRPH2</name>
</gene>
<evidence type="ECO:0000250" key="1"/>
<evidence type="ECO:0000250" key="2">
    <source>
        <dbReference type="UniProtKB" id="P31943"/>
    </source>
</evidence>
<evidence type="ECO:0000250" key="3">
    <source>
        <dbReference type="UniProtKB" id="P55795"/>
    </source>
</evidence>
<evidence type="ECO:0000250" key="4">
    <source>
        <dbReference type="UniProtKB" id="P70333"/>
    </source>
</evidence>
<evidence type="ECO:0000255" key="5">
    <source>
        <dbReference type="PROSITE-ProRule" id="PRU00176"/>
    </source>
</evidence>
<reference key="1">
    <citation type="submission" date="2005-08" db="EMBL/GenBank/DDBJ databases">
        <authorList>
            <consortium name="NIH - Mammalian Gene Collection (MGC) project"/>
        </authorList>
    </citation>
    <scope>NUCLEOTIDE SEQUENCE [LARGE SCALE MRNA]</scope>
    <source>
        <strain>Hereford</strain>
        <tissue>Testis</tissue>
    </source>
</reference>
<protein>
    <recommendedName>
        <fullName>Heterogeneous nuclear ribonucleoprotein H2</fullName>
        <shortName>hnRNP H2</shortName>
    </recommendedName>
    <alternativeName>
        <fullName>Heterogeneous nuclear ribonucleoprotein H'</fullName>
        <shortName>hnRNP H'</shortName>
    </alternativeName>
    <component>
        <recommendedName>
            <fullName>Heterogeneous nuclear ribonucleoprotein H2, N-terminally processed</fullName>
        </recommendedName>
    </component>
</protein>
<name>HNRH2_BOVIN</name>
<feature type="chain" id="PRO_0000434384" description="Heterogeneous nuclear ribonucleoprotein H2">
    <location>
        <begin position="1"/>
        <end position="449"/>
    </location>
</feature>
<feature type="initiator methionine" description="Removed; alternate" evidence="2">
    <location>
        <position position="1"/>
    </location>
</feature>
<feature type="chain" id="PRO_0000244428" description="Heterogeneous nuclear ribonucleoprotein H2, N-terminally processed">
    <location>
        <begin position="2"/>
        <end position="449"/>
    </location>
</feature>
<feature type="domain" description="RRM 1" evidence="5">
    <location>
        <begin position="11"/>
        <end position="90"/>
    </location>
</feature>
<feature type="domain" description="RRM 2" evidence="5">
    <location>
        <begin position="111"/>
        <end position="188"/>
    </location>
</feature>
<feature type="repeat" description="1-1">
    <location>
        <begin position="234"/>
        <end position="249"/>
    </location>
</feature>
<feature type="domain" description="RRM 3" evidence="5">
    <location>
        <begin position="289"/>
        <end position="364"/>
    </location>
</feature>
<feature type="repeat" description="2-1">
    <location>
        <begin position="354"/>
        <end position="372"/>
    </location>
</feature>
<feature type="repeat" description="2-2">
    <location>
        <begin position="374"/>
        <end position="392"/>
    </location>
</feature>
<feature type="repeat" description="1-2">
    <location>
        <begin position="418"/>
        <end position="433"/>
    </location>
</feature>
<feature type="region of interest" description="2 X 16 AA Gly-rich approximate repeats">
    <location>
        <begin position="234"/>
        <end position="433"/>
    </location>
</feature>
<feature type="region of interest" description="2 X 19 AA perfect repeats">
    <location>
        <begin position="354"/>
        <end position="392"/>
    </location>
</feature>
<feature type="modified residue" description="N-acetylmethionine" evidence="2">
    <location>
        <position position="1"/>
    </location>
</feature>
<feature type="modified residue" description="N-acetylmethionine; in Heterogeneous nuclear ribonucleoprotein H2, N-terminally processed" evidence="2">
    <location>
        <position position="2"/>
    </location>
</feature>
<feature type="modified residue" description="Phosphoserine" evidence="2">
    <location>
        <position position="23"/>
    </location>
</feature>
<feature type="modified residue" description="Phosphoserine" evidence="2">
    <location>
        <position position="54"/>
    </location>
</feature>
<feature type="modified residue" description="Phosphoserine" evidence="2">
    <location>
        <position position="63"/>
    </location>
</feature>
<feature type="modified residue" description="Phosphoserine" evidence="4">
    <location>
        <position position="90"/>
    </location>
</feature>
<feature type="modified residue" description="Dimethylated arginine; alternate" evidence="2">
    <location>
        <position position="233"/>
    </location>
</feature>
<feature type="modified residue" description="Omega-N-methylarginine; alternate" evidence="3">
    <location>
        <position position="233"/>
    </location>
</feature>
<feature type="modified residue" description="Phosphotyrosine" evidence="2">
    <location>
        <position position="246"/>
    </location>
</feature>
<feature type="modified residue" description="Phosphoserine" evidence="3">
    <location>
        <position position="310"/>
    </location>
</feature>
<feature type="cross-link" description="Glycyl lysine isopeptide (Lys-Gly) (interchain with G-Cter in SUMO2)" evidence="3">
    <location>
        <position position="35"/>
    </location>
</feature>
<feature type="cross-link" description="Glycyl lysine isopeptide (Lys-Gly) (interchain with G-Cter in SUMO2)" evidence="2">
    <location>
        <position position="87"/>
    </location>
</feature>
<feature type="cross-link" description="Glycyl lysine isopeptide (Lys-Gly) (interchain with G-Cter in SUMO2)" evidence="2">
    <location>
        <position position="98"/>
    </location>
</feature>
<comment type="function">
    <text evidence="1">This protein is a component of the heterogeneous nuclear ribonucleoprotein (hnRNP) complexes which provide the substrate for the processing events that pre-mRNAs undergo before becoming functional, translatable mRNAs in the cytoplasm. Binds poly(RG) (By similarity).</text>
</comment>
<comment type="subunit">
    <text evidence="3">Component of a ribonucleoprotein complex containing mRNAs and RNA-binding proteins including DDX5, HNRNPH2 and SRSF1 as well as splicing regulator ARVCF. Interacts with TXNL4/DIM1.</text>
</comment>
<comment type="subcellular location">
    <subcellularLocation>
        <location evidence="3">Nucleus</location>
        <location evidence="3">Nucleoplasm</location>
    </subcellularLocation>
</comment>
<organism>
    <name type="scientific">Bos taurus</name>
    <name type="common">Bovine</name>
    <dbReference type="NCBI Taxonomy" id="9913"/>
    <lineage>
        <taxon>Eukaryota</taxon>
        <taxon>Metazoa</taxon>
        <taxon>Chordata</taxon>
        <taxon>Craniata</taxon>
        <taxon>Vertebrata</taxon>
        <taxon>Euteleostomi</taxon>
        <taxon>Mammalia</taxon>
        <taxon>Eutheria</taxon>
        <taxon>Laurasiatheria</taxon>
        <taxon>Artiodactyla</taxon>
        <taxon>Ruminantia</taxon>
        <taxon>Pecora</taxon>
        <taxon>Bovidae</taxon>
        <taxon>Bovinae</taxon>
        <taxon>Bos</taxon>
    </lineage>
</organism>
<sequence length="449" mass="49265">MMLSTEGREGFVVKVRGLPWSCSADEVMRFFSDCKIQNGTSGIRFIYTREGRPSGEAFVELESEDEVKLALKKDRETMGHRYVEVFKSNSVEMDWVLKHTGPNSPDTANDGFVRLRGLPFGCSKEEIVQFFSGLEIVPNGMTLPVDFQGRSTGEAFVQFASQEIAEKALKKHKERIGHRYIEIFKSSRAEVRTHYDPPRKLMAMQRPGPYDRPGAGRGYNSIGRGAGFERMRRGAYGGGYGGYDDYGGYNDGYGFGSDRFGRDQNYCFSGMSDHRYGDGGSSFQSTTGHCVHMRGLPYRATENDIYNFFSPLNPMRVHIEIGPDGRVTGEADVEFATHEDAVAAMAKDKANMQHRYVELFLNSTAGTSGGAYDHSYVELFLNSTAGASGGAYGSQMMGGMGISNQSSYGGPASQQLSGGYGGGYGGQSSMSGYDQVLQENSSDYQSNLA</sequence>
<keyword id="KW-0007">Acetylation</keyword>
<keyword id="KW-1017">Isopeptide bond</keyword>
<keyword id="KW-0488">Methylation</keyword>
<keyword id="KW-0539">Nucleus</keyword>
<keyword id="KW-0597">Phosphoprotein</keyword>
<keyword id="KW-1185">Reference proteome</keyword>
<keyword id="KW-0677">Repeat</keyword>
<keyword id="KW-0687">Ribonucleoprotein</keyword>
<keyword id="KW-0694">RNA-binding</keyword>
<keyword id="KW-0832">Ubl conjugation</keyword>
<dbReference type="EMBL" id="BC102894">
    <property type="protein sequence ID" value="AAI02895.1"/>
    <property type="molecule type" value="mRNA"/>
</dbReference>
<dbReference type="RefSeq" id="NP_001069476.1">
    <property type="nucleotide sequence ID" value="NM_001076008.1"/>
</dbReference>
<dbReference type="SMR" id="Q3SZF3"/>
<dbReference type="FunCoup" id="Q3SZF3">
    <property type="interactions" value="440"/>
</dbReference>
<dbReference type="STRING" id="9913.ENSBTAP00000009864"/>
<dbReference type="PaxDb" id="9913-ENSBTAP00000009864"/>
<dbReference type="PeptideAtlas" id="Q3SZF3"/>
<dbReference type="GeneID" id="534001"/>
<dbReference type="KEGG" id="bta:534001"/>
<dbReference type="CTD" id="3188"/>
<dbReference type="eggNOG" id="KOG4211">
    <property type="taxonomic scope" value="Eukaryota"/>
</dbReference>
<dbReference type="InParanoid" id="Q3SZF3"/>
<dbReference type="OrthoDB" id="431068at2759"/>
<dbReference type="Proteomes" id="UP000009136">
    <property type="component" value="Unplaced"/>
</dbReference>
<dbReference type="GO" id="GO:0005654">
    <property type="term" value="C:nucleoplasm"/>
    <property type="evidence" value="ECO:0000250"/>
    <property type="project" value="UniProtKB"/>
</dbReference>
<dbReference type="GO" id="GO:1990904">
    <property type="term" value="C:ribonucleoprotein complex"/>
    <property type="evidence" value="ECO:0000318"/>
    <property type="project" value="GO_Central"/>
</dbReference>
<dbReference type="GO" id="GO:0003723">
    <property type="term" value="F:RNA binding"/>
    <property type="evidence" value="ECO:0000318"/>
    <property type="project" value="GO_Central"/>
</dbReference>
<dbReference type="GO" id="GO:0043484">
    <property type="term" value="P:regulation of RNA splicing"/>
    <property type="evidence" value="ECO:0000318"/>
    <property type="project" value="GO_Central"/>
</dbReference>
<dbReference type="CDD" id="cd12729">
    <property type="entry name" value="RRM1_hnRNPH_hnRNPH2_hnRNPF"/>
    <property type="match status" value="1"/>
</dbReference>
<dbReference type="CDD" id="cd12731">
    <property type="entry name" value="RRM2_hnRNPH_hnRNPH2_hnRNPF"/>
    <property type="match status" value="1"/>
</dbReference>
<dbReference type="CDD" id="cd12734">
    <property type="entry name" value="RRM3_hnRNPH_hnRNPH2_hnRNPF"/>
    <property type="match status" value="1"/>
</dbReference>
<dbReference type="FunFam" id="3.30.70.330:FF:000071">
    <property type="entry name" value="heterogeneous nuclear ribonucleoprotein H isoform X1"/>
    <property type="match status" value="1"/>
</dbReference>
<dbReference type="FunFam" id="3.30.70.330:FF:000075">
    <property type="entry name" value="Heterogeneous nuclear ribonucleoprotein H1 (H)"/>
    <property type="match status" value="1"/>
</dbReference>
<dbReference type="FunFam" id="3.30.70.330:FF:000031">
    <property type="entry name" value="Heterogeneous nuclear ribonucleoprotein h3 isoform"/>
    <property type="match status" value="1"/>
</dbReference>
<dbReference type="Gene3D" id="3.30.70.330">
    <property type="match status" value="3"/>
</dbReference>
<dbReference type="InterPro" id="IPR050666">
    <property type="entry name" value="ESRP"/>
</dbReference>
<dbReference type="InterPro" id="IPR012677">
    <property type="entry name" value="Nucleotide-bd_a/b_plait_sf"/>
</dbReference>
<dbReference type="InterPro" id="IPR035979">
    <property type="entry name" value="RBD_domain_sf"/>
</dbReference>
<dbReference type="InterPro" id="IPR000504">
    <property type="entry name" value="RRM_dom"/>
</dbReference>
<dbReference type="InterPro" id="IPR012996">
    <property type="entry name" value="Znf_CHHC"/>
</dbReference>
<dbReference type="PANTHER" id="PTHR13976">
    <property type="entry name" value="HETEROGENEOUS NUCLEAR RIBONUCLEOPROTEIN-RELATED"/>
    <property type="match status" value="1"/>
</dbReference>
<dbReference type="Pfam" id="PF00076">
    <property type="entry name" value="RRM_1"/>
    <property type="match status" value="3"/>
</dbReference>
<dbReference type="Pfam" id="PF08080">
    <property type="entry name" value="zf-RNPHF"/>
    <property type="match status" value="1"/>
</dbReference>
<dbReference type="SMART" id="SM00360">
    <property type="entry name" value="RRM"/>
    <property type="match status" value="3"/>
</dbReference>
<dbReference type="SUPFAM" id="SSF54928">
    <property type="entry name" value="RNA-binding domain, RBD"/>
    <property type="match status" value="3"/>
</dbReference>
<dbReference type="PROSITE" id="PS50102">
    <property type="entry name" value="RRM"/>
    <property type="match status" value="3"/>
</dbReference>